<keyword id="KW-1185">Reference proteome</keyword>
<reference key="1">
    <citation type="journal article" date="2002" name="Proc. Natl. Acad. Sci. U.S.A.">
        <title>Extensive mosaic structure revealed by the complete genome sequence of uropathogenic Escherichia coli.</title>
        <authorList>
            <person name="Welch R.A."/>
            <person name="Burland V."/>
            <person name="Plunkett G. III"/>
            <person name="Redford P."/>
            <person name="Roesch P."/>
            <person name="Rasko D."/>
            <person name="Buckles E.L."/>
            <person name="Liou S.-R."/>
            <person name="Boutin A."/>
            <person name="Hackett J."/>
            <person name="Stroud D."/>
            <person name="Mayhew G.F."/>
            <person name="Rose D.J."/>
            <person name="Zhou S."/>
            <person name="Schwartz D.C."/>
            <person name="Perna N.T."/>
            <person name="Mobley H.L.T."/>
            <person name="Donnenberg M.S."/>
            <person name="Blattner F.R."/>
        </authorList>
    </citation>
    <scope>NUCLEOTIDE SEQUENCE [LARGE SCALE GENOMIC DNA]</scope>
    <source>
        <strain>CFT073 / ATCC 700928 / UPEC</strain>
    </source>
</reference>
<organism>
    <name type="scientific">Escherichia coli O6:H1 (strain CFT073 / ATCC 700928 / UPEC)</name>
    <dbReference type="NCBI Taxonomy" id="199310"/>
    <lineage>
        <taxon>Bacteria</taxon>
        <taxon>Pseudomonadati</taxon>
        <taxon>Pseudomonadota</taxon>
        <taxon>Gammaproteobacteria</taxon>
        <taxon>Enterobacterales</taxon>
        <taxon>Enterobacteriaceae</taxon>
        <taxon>Escherichia</taxon>
    </lineage>
</organism>
<protein>
    <recommendedName>
        <fullName>Uncharacterized protein YebG</fullName>
    </recommendedName>
</protein>
<accession>P0ACZ0</accession>
<accession>P33220</accession>
<proteinExistence type="predicted"/>
<sequence length="96" mass="10717">MAVEVKYVVIREGEEKMSFTSKKEADAYDKMLDTADLLDTWLTNSPVQMEDEQREALSLWLAEQKDVLSTILKTGKLPSPQVVGAESEEEDASHAA</sequence>
<name>YEBG_ECOL6</name>
<gene>
    <name type="primary">yebG</name>
    <name type="ordered locus">c2260</name>
</gene>
<feature type="chain" id="PRO_0000169045" description="Uncharacterized protein YebG">
    <location>
        <begin position="1"/>
        <end position="96"/>
    </location>
</feature>
<dbReference type="EMBL" id="AE014075">
    <property type="protein sequence ID" value="AAN80719.1"/>
    <property type="molecule type" value="Genomic_DNA"/>
</dbReference>
<dbReference type="RefSeq" id="WP_000257738.1">
    <property type="nucleotide sequence ID" value="NZ_CP051263.1"/>
</dbReference>
<dbReference type="SMR" id="P0ACZ0"/>
<dbReference type="STRING" id="199310.c2260"/>
<dbReference type="GeneID" id="93776115"/>
<dbReference type="KEGG" id="ecc:c2260"/>
<dbReference type="eggNOG" id="COG3141">
    <property type="taxonomic scope" value="Bacteria"/>
</dbReference>
<dbReference type="HOGENOM" id="CLU_146554_1_0_6"/>
<dbReference type="BioCyc" id="ECOL199310:C2260-MONOMER"/>
<dbReference type="Proteomes" id="UP000001410">
    <property type="component" value="Chromosome"/>
</dbReference>
<dbReference type="Gene3D" id="1.10.10.710">
    <property type="entry name" value="PSPTO_1197 like"/>
    <property type="match status" value="1"/>
</dbReference>
<dbReference type="InterPro" id="IPR009813">
    <property type="entry name" value="Uncharacterised_YebG"/>
</dbReference>
<dbReference type="InterPro" id="IPR038627">
    <property type="entry name" value="YebG-like_sf"/>
</dbReference>
<dbReference type="NCBIfam" id="NF007475">
    <property type="entry name" value="PRK10061.1"/>
    <property type="match status" value="1"/>
</dbReference>
<dbReference type="Pfam" id="PF07130">
    <property type="entry name" value="YebG"/>
    <property type="match status" value="1"/>
</dbReference>